<name>CNN1_RAT</name>
<gene>
    <name type="primary">Cnn1</name>
</gene>
<dbReference type="EMBL" id="X71071">
    <property type="protein sequence ID" value="CAA50397.1"/>
    <property type="molecule type" value="mRNA"/>
</dbReference>
<dbReference type="EMBL" id="D14437">
    <property type="protein sequence ID" value="BAA03320.1"/>
    <property type="molecule type" value="mRNA"/>
</dbReference>
<dbReference type="EMBL" id="BC061809">
    <property type="protein sequence ID" value="AAH61809.1"/>
    <property type="molecule type" value="mRNA"/>
</dbReference>
<dbReference type="PIR" id="S37640">
    <property type="entry name" value="JN0773"/>
</dbReference>
<dbReference type="RefSeq" id="NP_113935.2">
    <property type="nucleotide sequence ID" value="NM_031747.2"/>
</dbReference>
<dbReference type="SMR" id="Q08290"/>
<dbReference type="BioGRID" id="249316">
    <property type="interactions" value="3"/>
</dbReference>
<dbReference type="FunCoup" id="Q08290">
    <property type="interactions" value="205"/>
</dbReference>
<dbReference type="IntAct" id="Q08290">
    <property type="interactions" value="1"/>
</dbReference>
<dbReference type="MINT" id="Q08290"/>
<dbReference type="STRING" id="10116.ENSRNOP00000029782"/>
<dbReference type="iPTMnet" id="Q08290"/>
<dbReference type="PhosphoSitePlus" id="Q08290"/>
<dbReference type="PaxDb" id="10116-ENSRNOP00000029782"/>
<dbReference type="Ensembl" id="ENSRNOT00000106276.1">
    <property type="protein sequence ID" value="ENSRNOP00000080119.1"/>
    <property type="gene ID" value="ENSRNOG00000027736.7"/>
</dbReference>
<dbReference type="GeneID" id="65204"/>
<dbReference type="KEGG" id="rno:65204"/>
<dbReference type="UCSC" id="RGD:621883">
    <property type="organism name" value="rat"/>
</dbReference>
<dbReference type="AGR" id="RGD:621883"/>
<dbReference type="CTD" id="1264"/>
<dbReference type="RGD" id="621883">
    <property type="gene designation" value="Cnn1"/>
</dbReference>
<dbReference type="eggNOG" id="KOG2046">
    <property type="taxonomic scope" value="Eukaryota"/>
</dbReference>
<dbReference type="GeneTree" id="ENSGT00940000159680"/>
<dbReference type="HOGENOM" id="CLU_055232_0_0_1"/>
<dbReference type="InParanoid" id="Q08290"/>
<dbReference type="OMA" id="GEPTHNH"/>
<dbReference type="PhylomeDB" id="Q08290"/>
<dbReference type="PRO" id="PR:Q08290"/>
<dbReference type="Proteomes" id="UP000002494">
    <property type="component" value="Chromosome 8"/>
</dbReference>
<dbReference type="Bgee" id="ENSRNOG00000027736">
    <property type="expression patterns" value="Expressed in colon and 19 other cell types or tissues"/>
</dbReference>
<dbReference type="GO" id="GO:0015629">
    <property type="term" value="C:actin cytoskeleton"/>
    <property type="evidence" value="ECO:0000318"/>
    <property type="project" value="GO_Central"/>
</dbReference>
<dbReference type="GO" id="GO:0005856">
    <property type="term" value="C:cytoskeleton"/>
    <property type="evidence" value="ECO:0000266"/>
    <property type="project" value="RGD"/>
</dbReference>
<dbReference type="GO" id="GO:0003779">
    <property type="term" value="F:actin binding"/>
    <property type="evidence" value="ECO:0000314"/>
    <property type="project" value="RGD"/>
</dbReference>
<dbReference type="GO" id="GO:0051015">
    <property type="term" value="F:actin filament binding"/>
    <property type="evidence" value="ECO:0000318"/>
    <property type="project" value="GO_Central"/>
</dbReference>
<dbReference type="GO" id="GO:0005516">
    <property type="term" value="F:calmodulin binding"/>
    <property type="evidence" value="ECO:0007669"/>
    <property type="project" value="UniProtKB-KW"/>
</dbReference>
<dbReference type="GO" id="GO:0007015">
    <property type="term" value="P:actin filament organization"/>
    <property type="evidence" value="ECO:0000318"/>
    <property type="project" value="GO_Central"/>
</dbReference>
<dbReference type="GO" id="GO:0031032">
    <property type="term" value="P:actomyosin structure organization"/>
    <property type="evidence" value="ECO:0007669"/>
    <property type="project" value="InterPro"/>
</dbReference>
<dbReference type="GO" id="GO:1904706">
    <property type="term" value="P:negative regulation of vascular associated smooth muscle cell proliferation"/>
    <property type="evidence" value="ECO:0000266"/>
    <property type="project" value="RGD"/>
</dbReference>
<dbReference type="CDD" id="cd21282">
    <property type="entry name" value="CH_CNN1"/>
    <property type="match status" value="1"/>
</dbReference>
<dbReference type="FunFam" id="1.10.418.10:FF:000040">
    <property type="entry name" value="Calponin"/>
    <property type="match status" value="1"/>
</dbReference>
<dbReference type="Gene3D" id="1.10.418.10">
    <property type="entry name" value="Calponin-like domain"/>
    <property type="match status" value="1"/>
</dbReference>
<dbReference type="InterPro" id="IPR050606">
    <property type="entry name" value="Calponin-like"/>
</dbReference>
<dbReference type="InterPro" id="IPR001997">
    <property type="entry name" value="Calponin/LIMCH1"/>
</dbReference>
<dbReference type="InterPro" id="IPR000557">
    <property type="entry name" value="Calponin_repeat"/>
</dbReference>
<dbReference type="InterPro" id="IPR001715">
    <property type="entry name" value="CH_dom"/>
</dbReference>
<dbReference type="InterPro" id="IPR036872">
    <property type="entry name" value="CH_dom_sf"/>
</dbReference>
<dbReference type="InterPro" id="IPR003096">
    <property type="entry name" value="SM22_calponin"/>
</dbReference>
<dbReference type="PANTHER" id="PTHR47385">
    <property type="entry name" value="CALPONIN"/>
    <property type="match status" value="1"/>
</dbReference>
<dbReference type="PANTHER" id="PTHR47385:SF10">
    <property type="entry name" value="TRANSGELIN-3"/>
    <property type="match status" value="1"/>
</dbReference>
<dbReference type="Pfam" id="PF00402">
    <property type="entry name" value="Calponin"/>
    <property type="match status" value="3"/>
</dbReference>
<dbReference type="Pfam" id="PF00307">
    <property type="entry name" value="CH"/>
    <property type="match status" value="1"/>
</dbReference>
<dbReference type="PRINTS" id="PR00889">
    <property type="entry name" value="CALPONIN"/>
</dbReference>
<dbReference type="PRINTS" id="PR00888">
    <property type="entry name" value="SM22CALPONIN"/>
</dbReference>
<dbReference type="SMART" id="SM00033">
    <property type="entry name" value="CH"/>
    <property type="match status" value="1"/>
</dbReference>
<dbReference type="SUPFAM" id="SSF47576">
    <property type="entry name" value="Calponin-homology domain, CH-domain"/>
    <property type="match status" value="1"/>
</dbReference>
<dbReference type="PROSITE" id="PS01052">
    <property type="entry name" value="CALPONIN_1"/>
    <property type="match status" value="3"/>
</dbReference>
<dbReference type="PROSITE" id="PS51122">
    <property type="entry name" value="CALPONIN_2"/>
    <property type="match status" value="3"/>
</dbReference>
<dbReference type="PROSITE" id="PS50021">
    <property type="entry name" value="CH"/>
    <property type="match status" value="1"/>
</dbReference>
<proteinExistence type="evidence at protein level"/>
<comment type="function">
    <text>Thin filament-associated protein that is implicated in the regulation and modulation of smooth muscle contraction. It is capable of binding to actin, calmodulin and tropomyosin. The interaction of calponin with actin inhibits the actomyosin Mg-ATPase activity.</text>
</comment>
<comment type="subunit">
    <text evidence="1">Part of cGMP kinase signaling complex at least composed of ACTA2/alpha-actin, CNN1/calponin H1, PLN/phospholamban, PRKG1 and ITPR1.</text>
</comment>
<comment type="tissue specificity">
    <text>Smooth muscle, and tissues containing significant amounts of smooth muscle.</text>
</comment>
<comment type="similarity">
    <text evidence="3">Belongs to the calponin family.</text>
</comment>
<accession>Q08290</accession>
<feature type="chain" id="PRO_0000204770" description="Calponin-1">
    <location>
        <begin position="1"/>
        <end position="297"/>
    </location>
</feature>
<feature type="domain" description="Calponin-homology (CH)" evidence="2">
    <location>
        <begin position="28"/>
        <end position="131"/>
    </location>
</feature>
<feature type="repeat" description="Calponin-like 1">
    <location>
        <begin position="164"/>
        <end position="189"/>
    </location>
</feature>
<feature type="repeat" description="Calponin-like 2">
    <location>
        <begin position="204"/>
        <end position="229"/>
    </location>
</feature>
<feature type="repeat" description="Calponin-like 3">
    <location>
        <begin position="243"/>
        <end position="268"/>
    </location>
</feature>
<feature type="modified residue" description="Phosphoserine" evidence="4">
    <location>
        <position position="48"/>
    </location>
</feature>
<feature type="modified residue" description="Phosphothreonine; by ROCK2" evidence="1">
    <location>
        <position position="170"/>
    </location>
</feature>
<feature type="modified residue" description="Phosphoserine; by ROCK2" evidence="1">
    <location>
        <position position="175"/>
    </location>
</feature>
<feature type="modified residue" description="Phosphothreonine; by ROCK2" evidence="1">
    <location>
        <position position="180"/>
    </location>
</feature>
<feature type="modified residue" description="Phosphothreonine; by ROCK2" evidence="1">
    <location>
        <position position="184"/>
    </location>
</feature>
<feature type="modified residue" description="Phosphothreonine; by ROCK2" evidence="1">
    <location>
        <position position="259"/>
    </location>
</feature>
<feature type="sequence conflict" description="In Ref. 2; BAA03320." evidence="3" ref="2">
    <original>K</original>
    <variation>E</variation>
    <location>
        <position position="97"/>
    </location>
</feature>
<sequence>MSSAHFNRGPAYGLSAEVKNKLAQKYDHQREQELREWIEGVTGRRIGSNFMDGLKDGIILCEFINKLQPGSVKKVNESTQNWHQLENIGNFIKAITKYGVKPHDIFEANDLFENTNHTQVQSTLLALASMAKTKGNKVNVGVKYAEKQERRFEPEKLREGRNIIGLQMGTNKFASQQGMTAYGTRRHLYDPKLGTDQPLDQATISLQMGTNKGASQAGMTAPGTKRQIFEPGLGMEHCDTLNVSLQMGSNKGASQRGMTVYGLPRQVYDPKYCLTPEYPELDEPTHNHHPHNYYNSA</sequence>
<organism>
    <name type="scientific">Rattus norvegicus</name>
    <name type="common">Rat</name>
    <dbReference type="NCBI Taxonomy" id="10116"/>
    <lineage>
        <taxon>Eukaryota</taxon>
        <taxon>Metazoa</taxon>
        <taxon>Chordata</taxon>
        <taxon>Craniata</taxon>
        <taxon>Vertebrata</taxon>
        <taxon>Euteleostomi</taxon>
        <taxon>Mammalia</taxon>
        <taxon>Eutheria</taxon>
        <taxon>Euarchontoglires</taxon>
        <taxon>Glires</taxon>
        <taxon>Rodentia</taxon>
        <taxon>Myomorpha</taxon>
        <taxon>Muroidea</taxon>
        <taxon>Muridae</taxon>
        <taxon>Murinae</taxon>
        <taxon>Rattus</taxon>
    </lineage>
</organism>
<reference key="1">
    <citation type="journal article" date="1993" name="Circ. Res.">
        <title>Isolation of gene markers of differentiated and proliferating vascular smooth muscle cells.</title>
        <authorList>
            <person name="Shanahan C.M."/>
            <person name="Weissberg P.L."/>
            <person name="Metcalfe J.C."/>
        </authorList>
    </citation>
    <scope>NUCLEOTIDE SEQUENCE [MRNA]</scope>
    <source>
        <strain>Wistar</strain>
        <tissue>Aortic smooth muscle</tissue>
    </source>
</reference>
<reference key="2">
    <citation type="journal article" date="1993" name="Gene">
        <title>cDNA cloning and mRNA expression of calponin and SM22 in rat aorta smooth muscle cells.</title>
        <authorList>
            <person name="Nishida W."/>
            <person name="Kitami Y."/>
            <person name="Hiwada K."/>
        </authorList>
    </citation>
    <scope>NUCLEOTIDE SEQUENCE [MRNA]</scope>
    <source>
        <strain>Sprague-Dawley</strain>
        <tissue>Aortic smooth muscle</tissue>
    </source>
</reference>
<reference key="3">
    <citation type="submission" date="1994-07" db="EMBL/GenBank/DDBJ databases">
        <authorList>
            <person name="Takahashi K."/>
        </authorList>
    </citation>
    <scope>NUCLEOTIDE SEQUENCE [MRNA]</scope>
    <source>
        <tissue>Pulmonary artery</tissue>
    </source>
</reference>
<reference key="4">
    <citation type="journal article" date="2004" name="Genome Res.">
        <title>The status, quality, and expansion of the NIH full-length cDNA project: the Mammalian Gene Collection (MGC).</title>
        <authorList>
            <consortium name="The MGC Project Team"/>
        </authorList>
    </citation>
    <scope>NUCLEOTIDE SEQUENCE [LARGE SCALE MRNA]</scope>
    <source>
        <tissue>Prostate</tissue>
    </source>
</reference>
<reference key="5">
    <citation type="journal article" date="2012" name="Nat. Commun.">
        <title>Quantitative maps of protein phosphorylation sites across 14 different rat organs and tissues.</title>
        <authorList>
            <person name="Lundby A."/>
            <person name="Secher A."/>
            <person name="Lage K."/>
            <person name="Nordsborg N.B."/>
            <person name="Dmytriyev A."/>
            <person name="Lundby C."/>
            <person name="Olsen J.V."/>
        </authorList>
    </citation>
    <scope>PHOSPHORYLATION [LARGE SCALE ANALYSIS] AT SER-48</scope>
    <scope>IDENTIFICATION BY MASS SPECTROMETRY [LARGE SCALE ANALYSIS]</scope>
</reference>
<protein>
    <recommendedName>
        <fullName>Calponin-1</fullName>
    </recommendedName>
    <alternativeName>
        <fullName>Basic calponin</fullName>
    </alternativeName>
    <alternativeName>
        <fullName>Calponin H1, smooth muscle</fullName>
    </alternativeName>
</protein>
<evidence type="ECO:0000250" key="1"/>
<evidence type="ECO:0000255" key="2">
    <source>
        <dbReference type="PROSITE-ProRule" id="PRU00044"/>
    </source>
</evidence>
<evidence type="ECO:0000305" key="3"/>
<evidence type="ECO:0007744" key="4">
    <source>
    </source>
</evidence>
<keyword id="KW-0009">Actin-binding</keyword>
<keyword id="KW-0112">Calmodulin-binding</keyword>
<keyword id="KW-0597">Phosphoprotein</keyword>
<keyword id="KW-1185">Reference proteome</keyword>
<keyword id="KW-0677">Repeat</keyword>